<comment type="function">
    <text evidence="1">Plays a role in efficient localization of neo-synthesized capsids to nuclear replication compartments, thereby controlling cleavage and packaging of virus genomic DNA.</text>
</comment>
<comment type="subcellular location">
    <subcellularLocation>
        <location>Host cytoplasm</location>
    </subcellularLocation>
    <subcellularLocation>
        <location>Host nucleus</location>
    </subcellularLocation>
    <text evidence="1">Mainly cytoplasmic in transfected cell culture.</text>
</comment>
<comment type="similarity">
    <text evidence="4">Belongs to the herpesviridae UL32 protein family.</text>
</comment>
<comment type="caution">
    <text evidence="4">Was originally thought to be an envelope glycoprotein.</text>
</comment>
<name>UL32_VZVD</name>
<accession>P09282</accession>
<organism>
    <name type="scientific">Varicella-zoster virus (strain Dumas)</name>
    <name type="common">HHV-3</name>
    <name type="synonym">Human herpesvirus 3</name>
    <dbReference type="NCBI Taxonomy" id="10338"/>
    <lineage>
        <taxon>Viruses</taxon>
        <taxon>Duplodnaviria</taxon>
        <taxon>Heunggongvirae</taxon>
        <taxon>Peploviricota</taxon>
        <taxon>Herviviricetes</taxon>
        <taxon>Herpesvirales</taxon>
        <taxon>Orthoherpesviridae</taxon>
        <taxon>Alphaherpesvirinae</taxon>
        <taxon>Varicellovirus</taxon>
        <taxon>Varicellovirus humanalpha3</taxon>
        <taxon>Human herpesvirus 3</taxon>
    </lineage>
</organism>
<keyword id="KW-1035">Host cytoplasm</keyword>
<keyword id="KW-1048">Host nucleus</keyword>
<keyword id="KW-0479">Metal-binding</keyword>
<keyword id="KW-1185">Reference proteome</keyword>
<keyword id="KW-0862">Zinc</keyword>
<keyword id="KW-0863">Zinc-finger</keyword>
<evidence type="ECO:0000250" key="1"/>
<evidence type="ECO:0000255" key="2">
    <source>
        <dbReference type="PROSITE-ProRule" id="PRU01332"/>
    </source>
</evidence>
<evidence type="ECO:0000256" key="3">
    <source>
        <dbReference type="SAM" id="MobiDB-lite"/>
    </source>
</evidence>
<evidence type="ECO:0000305" key="4"/>
<gene>
    <name type="primary">26</name>
</gene>
<proteinExistence type="inferred from homology"/>
<dbReference type="EMBL" id="X04370">
    <property type="protein sequence ID" value="CAA27908.1"/>
    <property type="molecule type" value="Genomic_DNA"/>
</dbReference>
<dbReference type="PIR" id="H27343">
    <property type="entry name" value="WZBE26"/>
</dbReference>
<dbReference type="SMR" id="P09282"/>
<dbReference type="Proteomes" id="UP000002602">
    <property type="component" value="Genome"/>
</dbReference>
<dbReference type="GO" id="GO:0030430">
    <property type="term" value="C:host cell cytoplasm"/>
    <property type="evidence" value="ECO:0007669"/>
    <property type="project" value="UniProtKB-SubCell"/>
</dbReference>
<dbReference type="GO" id="GO:0042025">
    <property type="term" value="C:host cell nucleus"/>
    <property type="evidence" value="ECO:0007669"/>
    <property type="project" value="UniProtKB-SubCell"/>
</dbReference>
<dbReference type="GO" id="GO:0019031">
    <property type="term" value="C:viral envelope"/>
    <property type="evidence" value="ECO:0007669"/>
    <property type="project" value="InterPro"/>
</dbReference>
<dbReference type="GO" id="GO:0008270">
    <property type="term" value="F:zinc ion binding"/>
    <property type="evidence" value="ECO:0007669"/>
    <property type="project" value="UniProtKB-KW"/>
</dbReference>
<dbReference type="InterPro" id="IPR002597">
    <property type="entry name" value="Herpes_env"/>
</dbReference>
<dbReference type="Pfam" id="PF01673">
    <property type="entry name" value="Herpes_env"/>
    <property type="match status" value="1"/>
</dbReference>
<dbReference type="PROSITE" id="PS51988">
    <property type="entry name" value="HERPESVIRUS_UL32"/>
    <property type="match status" value="1"/>
</dbReference>
<sequence length="585" mass="65695">MDRVESEEPMDGFESPVFSENTSSNSGWCSDAFSDSYIAYNPALLLKNDLLFSELLFASHLINVPRAIENNVTYEASSAVGVDNEMTSSTTEFIEEIGDVLALDRACLVCRTLDLYKRKFGLTPEWVADYAMLCMKSLASPPCAVVTFSAAFEFVYLMDRYYLCRYNVTLVGSFARRTLSLLDIQRHFFLHVCFRTDGGLPGIRPPPGKEMANKVRYSNYSFFVQAVVRAALLSISTSRLDETETRKSFYFNQDGLTGGPQPLAAALANWKDCARMVDCSSSEHRTSGMITCAERALKEDIEFEDILIDKLKKSSYVEAAWGYADLALLLLSGVATWNVDERTNCAIETRVGCVKSYWQANRIENSRDVPKQFSKFTSEDACPEVAFGPILLTTLKNAKCRGRTNTECMLCCLLTIGHYWIALRQFKRDILAYSANNTSLFDCIEPVINAWSLDNPIKLKFPFNDEGRFITIVKAAGSEAVYKHLFCDLLCALSELQTNPKILFAHPTTADKEVLELYKAQLAAQNRFEGRVCAGLWTLAYAFKAYQIFPRKPTANAAFIRDGGLMLRRHAISLVSLEHTLSKYV</sequence>
<reference key="1">
    <citation type="journal article" date="1986" name="J. Gen. Virol.">
        <title>The complete DNA sequence of varicella-zoster virus.</title>
        <authorList>
            <person name="Davison A.J."/>
            <person name="Scott J.E."/>
        </authorList>
    </citation>
    <scope>NUCLEOTIDE SEQUENCE [LARGE SCALE GENOMIC DNA]</scope>
</reference>
<organismHost>
    <name type="scientific">Homo sapiens</name>
    <name type="common">Human</name>
    <dbReference type="NCBI Taxonomy" id="9606"/>
</organismHost>
<protein>
    <recommendedName>
        <fullName>Packaging protein UL32</fullName>
    </recommendedName>
</protein>
<feature type="chain" id="PRO_0000116019" description="Packaging protein UL32">
    <location>
        <begin position="1"/>
        <end position="585"/>
    </location>
</feature>
<feature type="region of interest" description="Disordered" evidence="3">
    <location>
        <begin position="1"/>
        <end position="25"/>
    </location>
</feature>
<feature type="region of interest" description="Zinc finger 1" evidence="2">
    <location>
        <begin position="107"/>
        <end position="193"/>
    </location>
</feature>
<feature type="region of interest" description="Zinc finger 2" evidence="2">
    <location>
        <begin position="408"/>
        <end position="491"/>
    </location>
</feature>
<feature type="binding site" evidence="2">
    <location>
        <position position="107"/>
    </location>
    <ligand>
        <name>Zn(2+)</name>
        <dbReference type="ChEBI" id="CHEBI:29105"/>
        <label>1</label>
    </ligand>
</feature>
<feature type="binding site" evidence="2">
    <location>
        <position position="110"/>
    </location>
    <ligand>
        <name>Zn(2+)</name>
        <dbReference type="ChEBI" id="CHEBI:29105"/>
        <label>1</label>
    </ligand>
</feature>
<feature type="binding site" evidence="2">
    <location>
        <position position="187"/>
    </location>
    <ligand>
        <name>Zn(2+)</name>
        <dbReference type="ChEBI" id="CHEBI:29105"/>
        <label>1</label>
    </ligand>
</feature>
<feature type="binding site" evidence="2">
    <location>
        <position position="193"/>
    </location>
    <ligand>
        <name>Zn(2+)</name>
        <dbReference type="ChEBI" id="CHEBI:29105"/>
        <label>1</label>
    </ligand>
</feature>
<feature type="binding site" evidence="2">
    <location>
        <position position="408"/>
    </location>
    <ligand>
        <name>Zn(2+)</name>
        <dbReference type="ChEBI" id="CHEBI:29105"/>
        <label>2</label>
    </ligand>
</feature>
<feature type="binding site" evidence="2">
    <location>
        <position position="411"/>
    </location>
    <ligand>
        <name>Zn(2+)</name>
        <dbReference type="ChEBI" id="CHEBI:29105"/>
        <label>2</label>
    </ligand>
</feature>
<feature type="binding site" evidence="2">
    <location>
        <position position="484"/>
    </location>
    <ligand>
        <name>Zn(2+)</name>
        <dbReference type="ChEBI" id="CHEBI:29105"/>
        <label>2</label>
    </ligand>
</feature>
<feature type="binding site" evidence="2">
    <location>
        <position position="491"/>
    </location>
    <ligand>
        <name>Zn(2+)</name>
        <dbReference type="ChEBI" id="CHEBI:29105"/>
        <label>2</label>
    </ligand>
</feature>